<sequence length="89" mass="9764">MAHKKAGGSSRNGRDSAGQRRGVKRFGGERVLAGNILVRQLGTRVHPGDNVGMGRDYTLFATVEGTVKYEKYTRKKKVQTRVHVVPAQA</sequence>
<keyword id="KW-0687">Ribonucleoprotein</keyword>
<keyword id="KW-0689">Ribosomal protein</keyword>
<comment type="similarity">
    <text evidence="1">Belongs to the bacterial ribosomal protein bL27 family.</text>
</comment>
<dbReference type="EMBL" id="CP001197">
    <property type="protein sequence ID" value="ACL08327.1"/>
    <property type="molecule type" value="Genomic_DNA"/>
</dbReference>
<dbReference type="SMR" id="B8DRP0"/>
<dbReference type="STRING" id="883.DvMF_1379"/>
<dbReference type="KEGG" id="dvm:DvMF_1379"/>
<dbReference type="eggNOG" id="COG0211">
    <property type="taxonomic scope" value="Bacteria"/>
</dbReference>
<dbReference type="HOGENOM" id="CLU_095424_4_0_7"/>
<dbReference type="OrthoDB" id="9803474at2"/>
<dbReference type="GO" id="GO:0022625">
    <property type="term" value="C:cytosolic large ribosomal subunit"/>
    <property type="evidence" value="ECO:0007669"/>
    <property type="project" value="TreeGrafter"/>
</dbReference>
<dbReference type="GO" id="GO:0003735">
    <property type="term" value="F:structural constituent of ribosome"/>
    <property type="evidence" value="ECO:0007669"/>
    <property type="project" value="InterPro"/>
</dbReference>
<dbReference type="GO" id="GO:0006412">
    <property type="term" value="P:translation"/>
    <property type="evidence" value="ECO:0007669"/>
    <property type="project" value="UniProtKB-UniRule"/>
</dbReference>
<dbReference type="FunFam" id="2.40.50.100:FF:000060">
    <property type="entry name" value="Apicoplast ribosomal protein L27"/>
    <property type="match status" value="1"/>
</dbReference>
<dbReference type="Gene3D" id="2.40.50.100">
    <property type="match status" value="1"/>
</dbReference>
<dbReference type="HAMAP" id="MF_00539">
    <property type="entry name" value="Ribosomal_bL27"/>
    <property type="match status" value="1"/>
</dbReference>
<dbReference type="InterPro" id="IPR001684">
    <property type="entry name" value="Ribosomal_bL27"/>
</dbReference>
<dbReference type="NCBIfam" id="TIGR00062">
    <property type="entry name" value="L27"/>
    <property type="match status" value="1"/>
</dbReference>
<dbReference type="PANTHER" id="PTHR15893:SF0">
    <property type="entry name" value="LARGE RIBOSOMAL SUBUNIT PROTEIN BL27M"/>
    <property type="match status" value="1"/>
</dbReference>
<dbReference type="PANTHER" id="PTHR15893">
    <property type="entry name" value="RIBOSOMAL PROTEIN L27"/>
    <property type="match status" value="1"/>
</dbReference>
<dbReference type="Pfam" id="PF01016">
    <property type="entry name" value="Ribosomal_L27"/>
    <property type="match status" value="1"/>
</dbReference>
<dbReference type="PRINTS" id="PR00063">
    <property type="entry name" value="RIBOSOMALL27"/>
</dbReference>
<dbReference type="SUPFAM" id="SSF110324">
    <property type="entry name" value="Ribosomal L27 protein-like"/>
    <property type="match status" value="1"/>
</dbReference>
<feature type="chain" id="PRO_1000128738" description="Large ribosomal subunit protein bL27">
    <location>
        <begin position="1"/>
        <end position="89"/>
    </location>
</feature>
<feature type="region of interest" description="Disordered" evidence="2">
    <location>
        <begin position="1"/>
        <end position="26"/>
    </location>
</feature>
<accession>B8DRP0</accession>
<reference key="1">
    <citation type="submission" date="2008-10" db="EMBL/GenBank/DDBJ databases">
        <title>Complete sequence of Desulfovibrio vulgaris str. 'Miyazaki F'.</title>
        <authorList>
            <person name="Lucas S."/>
            <person name="Copeland A."/>
            <person name="Lapidus A."/>
            <person name="Glavina del Rio T."/>
            <person name="Dalin E."/>
            <person name="Tice H."/>
            <person name="Bruce D."/>
            <person name="Goodwin L."/>
            <person name="Pitluck S."/>
            <person name="Sims D."/>
            <person name="Brettin T."/>
            <person name="Detter J.C."/>
            <person name="Han C."/>
            <person name="Larimer F."/>
            <person name="Land M."/>
            <person name="Hauser L."/>
            <person name="Kyrpides N."/>
            <person name="Mikhailova N."/>
            <person name="Hazen T.C."/>
            <person name="Richardson P."/>
        </authorList>
    </citation>
    <scope>NUCLEOTIDE SEQUENCE [LARGE SCALE GENOMIC DNA]</scope>
    <source>
        <strain>DSM 19637 / Miyazaki F</strain>
    </source>
</reference>
<proteinExistence type="inferred from homology"/>
<gene>
    <name evidence="1" type="primary">rpmA</name>
    <name type="ordered locus">DvMF_1379</name>
</gene>
<evidence type="ECO:0000255" key="1">
    <source>
        <dbReference type="HAMAP-Rule" id="MF_00539"/>
    </source>
</evidence>
<evidence type="ECO:0000256" key="2">
    <source>
        <dbReference type="SAM" id="MobiDB-lite"/>
    </source>
</evidence>
<evidence type="ECO:0000305" key="3"/>
<protein>
    <recommendedName>
        <fullName evidence="1">Large ribosomal subunit protein bL27</fullName>
    </recommendedName>
    <alternativeName>
        <fullName evidence="3">50S ribosomal protein L27</fullName>
    </alternativeName>
</protein>
<name>RL27_NITV9</name>
<organism>
    <name type="scientific">Nitratidesulfovibrio vulgaris (strain DSM 19637 / Miyazaki F)</name>
    <name type="common">Desulfovibrio vulgaris</name>
    <dbReference type="NCBI Taxonomy" id="883"/>
    <lineage>
        <taxon>Bacteria</taxon>
        <taxon>Pseudomonadati</taxon>
        <taxon>Thermodesulfobacteriota</taxon>
        <taxon>Desulfovibrionia</taxon>
        <taxon>Desulfovibrionales</taxon>
        <taxon>Desulfovibrionaceae</taxon>
        <taxon>Nitratidesulfovibrio</taxon>
    </lineage>
</organism>